<gene>
    <name evidence="1" type="primary">eco</name>
    <name type="ordered locus">YPTB1251</name>
</gene>
<comment type="function">
    <text evidence="1">General inhibitor of pancreatic serine proteases: inhibits chymotrypsin, trypsin, elastases, factor X, kallikrein as well as a variety of other proteases.</text>
</comment>
<comment type="subunit">
    <text evidence="1">Homodimer.</text>
</comment>
<comment type="subcellular location">
    <subcellularLocation>
        <location evidence="1">Periplasm</location>
    </subcellularLocation>
</comment>
<comment type="similarity">
    <text evidence="1">Belongs to the protease inhibitor I11 (ecotin) family.</text>
</comment>
<protein>
    <recommendedName>
        <fullName evidence="1">Ecotin</fullName>
    </recommendedName>
</protein>
<reference key="1">
    <citation type="journal article" date="2004" name="Proc. Natl. Acad. Sci. U.S.A.">
        <title>Insights into the evolution of Yersinia pestis through whole-genome comparison with Yersinia pseudotuberculosis.</title>
        <authorList>
            <person name="Chain P.S.G."/>
            <person name="Carniel E."/>
            <person name="Larimer F.W."/>
            <person name="Lamerdin J."/>
            <person name="Stoutland P.O."/>
            <person name="Regala W.M."/>
            <person name="Georgescu A.M."/>
            <person name="Vergez L.M."/>
            <person name="Land M.L."/>
            <person name="Motin V.L."/>
            <person name="Brubaker R.R."/>
            <person name="Fowler J."/>
            <person name="Hinnebusch J."/>
            <person name="Marceau M."/>
            <person name="Medigue C."/>
            <person name="Simonet M."/>
            <person name="Chenal-Francisque V."/>
            <person name="Souza B."/>
            <person name="Dacheux D."/>
            <person name="Elliott J.M."/>
            <person name="Derbise A."/>
            <person name="Hauser L.J."/>
            <person name="Garcia E."/>
        </authorList>
    </citation>
    <scope>NUCLEOTIDE SEQUENCE [LARGE SCALE GENOMIC DNA]</scope>
    <source>
        <strain>IP32953</strain>
    </source>
</reference>
<sequence>MKKCSIILASVLLATSINAIADTPTPLNQQQPLEKIAPYPQAEKGMSRQVIFLEPQKDESRFKVELLIGKTLNVDCNRHMLGGNLETRTLSGWGFDYLVMDKISQPASTMMACPEDSKPQVKFVTANLGDAAMQRYNSRLPIVVYVPQGVEVKYRIWEAGEDIRSAQVK</sequence>
<accession>Q66CZ8</accession>
<dbReference type="EMBL" id="BX936398">
    <property type="protein sequence ID" value="CAH20491.1"/>
    <property type="molecule type" value="Genomic_DNA"/>
</dbReference>
<dbReference type="RefSeq" id="WP_002210815.1">
    <property type="nucleotide sequence ID" value="NZ_CP009712.1"/>
</dbReference>
<dbReference type="SMR" id="Q66CZ8"/>
<dbReference type="MEROPS" id="I11.001"/>
<dbReference type="GeneID" id="57977350"/>
<dbReference type="KEGG" id="ypo:BZ17_1276"/>
<dbReference type="KEGG" id="yps:YPTB1251"/>
<dbReference type="PATRIC" id="fig|273123.14.peg.1363"/>
<dbReference type="Proteomes" id="UP000001011">
    <property type="component" value="Chromosome"/>
</dbReference>
<dbReference type="GO" id="GO:0042597">
    <property type="term" value="C:periplasmic space"/>
    <property type="evidence" value="ECO:0007669"/>
    <property type="project" value="UniProtKB-SubCell"/>
</dbReference>
<dbReference type="GO" id="GO:0004867">
    <property type="term" value="F:serine-type endopeptidase inhibitor activity"/>
    <property type="evidence" value="ECO:0007669"/>
    <property type="project" value="UniProtKB-UniRule"/>
</dbReference>
<dbReference type="CDD" id="cd00242">
    <property type="entry name" value="Ecotin"/>
    <property type="match status" value="1"/>
</dbReference>
<dbReference type="Gene3D" id="2.60.40.550">
    <property type="entry name" value="Ecotin"/>
    <property type="match status" value="1"/>
</dbReference>
<dbReference type="HAMAP" id="MF_00706">
    <property type="entry name" value="Ecotin"/>
    <property type="match status" value="1"/>
</dbReference>
<dbReference type="InterPro" id="IPR036198">
    <property type="entry name" value="Ecotin_sf"/>
</dbReference>
<dbReference type="InterPro" id="IPR005658">
    <property type="entry name" value="Prot_inh_ecotin"/>
</dbReference>
<dbReference type="InterPro" id="IPR023084">
    <property type="entry name" value="Prot_inh_ecotin_gammaproteobac"/>
</dbReference>
<dbReference type="NCBIfam" id="NF002987">
    <property type="entry name" value="PRK03719.1"/>
    <property type="match status" value="1"/>
</dbReference>
<dbReference type="PANTHER" id="PTHR35890">
    <property type="match status" value="1"/>
</dbReference>
<dbReference type="PANTHER" id="PTHR35890:SF3">
    <property type="entry name" value="ECOTIN"/>
    <property type="match status" value="1"/>
</dbReference>
<dbReference type="Pfam" id="PF03974">
    <property type="entry name" value="Ecotin"/>
    <property type="match status" value="1"/>
</dbReference>
<dbReference type="PIRSF" id="PIRSF006865">
    <property type="entry name" value="Prot_inh_ecotin"/>
    <property type="match status" value="1"/>
</dbReference>
<dbReference type="SUPFAM" id="SSF49772">
    <property type="entry name" value="Ecotin, trypsin inhibitor"/>
    <property type="match status" value="1"/>
</dbReference>
<name>ECOT_YERPS</name>
<organism>
    <name type="scientific">Yersinia pseudotuberculosis serotype I (strain IP32953)</name>
    <dbReference type="NCBI Taxonomy" id="273123"/>
    <lineage>
        <taxon>Bacteria</taxon>
        <taxon>Pseudomonadati</taxon>
        <taxon>Pseudomonadota</taxon>
        <taxon>Gammaproteobacteria</taxon>
        <taxon>Enterobacterales</taxon>
        <taxon>Yersiniaceae</taxon>
        <taxon>Yersinia</taxon>
    </lineage>
</organism>
<proteinExistence type="inferred from homology"/>
<keyword id="KW-1015">Disulfide bond</keyword>
<keyword id="KW-0574">Periplasm</keyword>
<keyword id="KW-0646">Protease inhibitor</keyword>
<keyword id="KW-0722">Serine protease inhibitor</keyword>
<keyword id="KW-0732">Signal</keyword>
<feature type="signal peptide" evidence="1">
    <location>
        <begin position="1"/>
        <end position="21"/>
    </location>
</feature>
<feature type="chain" id="PRO_0000007435" description="Ecotin">
    <location>
        <begin position="22"/>
        <end position="169"/>
    </location>
</feature>
<feature type="site" description="Reactive bond" evidence="1">
    <location>
        <begin position="110"/>
        <end position="111"/>
    </location>
</feature>
<feature type="disulfide bond" evidence="1">
    <location>
        <begin position="76"/>
        <end position="113"/>
    </location>
</feature>
<evidence type="ECO:0000255" key="1">
    <source>
        <dbReference type="HAMAP-Rule" id="MF_00706"/>
    </source>
</evidence>